<gene>
    <name evidence="1" type="primary">ileS</name>
    <name type="ordered locus">ECP_0024</name>
</gene>
<sequence>MSDYKSTLNLPETGFPMRGDLAKREPGMLARWTDDDLYGIIRAAKKGKKTFILHDGPPYANGSIHIGHSVNKILKDIIIKSKGLSGYDSPYVPGWDCHGLPIELKVEQEYGKPGEKFTAAEFRAKCREYAATQVDGQRKDFIRLGVLGDWSHPYLTMDFKTEANIIRALGKIIGNGHLHKGAKPVHWCVDCRSALAEAEVEYYDKTSPSIDVAFQAVDQDALKTKFGVSNVNGPISLVIWTTTPWTLPANRAISIAPDFDYALVQIDGQAVILAKDLVESVMQRIGVSDYTILGTVKGAELELLRFTHPFMDFDVPAILGDHVTLDAGTGAVHTAPGHGPDDYVIGQKYGLETANPVGPDGTYLPGTYPTLDGVNVFKANDIVIALLQEKGALLHVEKMQHSYPCCWRHKTPIIFRATPQWFVSMDQKGLRAQSLKEIKGVQWIPDWGQARIESMVANRPDWCISRQRTWGVPMSLFVHKDTEELHPRTLELMEEVAKRVEVDGIQAWWDLDAKEILGDEADQYVKVPDTLDVWFDSGSTHSSVVDVRPEFAGHAADMYLEGSDQHRGWFMSSLMISTAMKGKAPYRQVLTHGFTVDGQGRKMSKSIGNTVSPQDVMNKLGADILRLWVASTDYTGEMAVSDEILKRAADSYRRIRNTARFLLANLNGFDPAKDMVKPEEMVVLDRWAVGCAKAAQEDILKAYEAYDFHEVVQRLMRFCSVEMGSFYLDIIKDRQYTAKADSVARRSCQTALYHIAEALVRWMAPILSFTADEVWGYLPGEREKYVFTGEWYEGLFGLADSEAMNDAFWDELLKVRGEVNKVIEQARADKNVGGSLEAAVTLYAEPELAAKLTALGDELRFVLLTSGATVADYNDAPADAQQSEVLKGLKVALSKAEGEKCPRCWHYTQDVGKVAEHAEICGRCVSNVAGDGEKRKFA</sequence>
<organism>
    <name type="scientific">Escherichia coli O6:K15:H31 (strain 536 / UPEC)</name>
    <dbReference type="NCBI Taxonomy" id="362663"/>
    <lineage>
        <taxon>Bacteria</taxon>
        <taxon>Pseudomonadati</taxon>
        <taxon>Pseudomonadota</taxon>
        <taxon>Gammaproteobacteria</taxon>
        <taxon>Enterobacterales</taxon>
        <taxon>Enterobacteriaceae</taxon>
        <taxon>Escherichia</taxon>
    </lineage>
</organism>
<evidence type="ECO:0000255" key="1">
    <source>
        <dbReference type="HAMAP-Rule" id="MF_02002"/>
    </source>
</evidence>
<dbReference type="EC" id="6.1.1.5" evidence="1"/>
<dbReference type="EMBL" id="CP000247">
    <property type="protein sequence ID" value="ABG68066.1"/>
    <property type="molecule type" value="Genomic_DNA"/>
</dbReference>
<dbReference type="RefSeq" id="WP_001286825.1">
    <property type="nucleotide sequence ID" value="NC_008253.1"/>
</dbReference>
<dbReference type="SMR" id="Q0TLW5"/>
<dbReference type="KEGG" id="ecp:ECP_0024"/>
<dbReference type="HOGENOM" id="CLU_001493_7_1_6"/>
<dbReference type="Proteomes" id="UP000009182">
    <property type="component" value="Chromosome"/>
</dbReference>
<dbReference type="GO" id="GO:0005829">
    <property type="term" value="C:cytosol"/>
    <property type="evidence" value="ECO:0007669"/>
    <property type="project" value="TreeGrafter"/>
</dbReference>
<dbReference type="GO" id="GO:0002161">
    <property type="term" value="F:aminoacyl-tRNA deacylase activity"/>
    <property type="evidence" value="ECO:0007669"/>
    <property type="project" value="InterPro"/>
</dbReference>
<dbReference type="GO" id="GO:0005524">
    <property type="term" value="F:ATP binding"/>
    <property type="evidence" value="ECO:0007669"/>
    <property type="project" value="UniProtKB-UniRule"/>
</dbReference>
<dbReference type="GO" id="GO:0004822">
    <property type="term" value="F:isoleucine-tRNA ligase activity"/>
    <property type="evidence" value="ECO:0007669"/>
    <property type="project" value="UniProtKB-UniRule"/>
</dbReference>
<dbReference type="GO" id="GO:0000049">
    <property type="term" value="F:tRNA binding"/>
    <property type="evidence" value="ECO:0007669"/>
    <property type="project" value="InterPro"/>
</dbReference>
<dbReference type="GO" id="GO:0008270">
    <property type="term" value="F:zinc ion binding"/>
    <property type="evidence" value="ECO:0007669"/>
    <property type="project" value="UniProtKB-UniRule"/>
</dbReference>
<dbReference type="GO" id="GO:0006428">
    <property type="term" value="P:isoleucyl-tRNA aminoacylation"/>
    <property type="evidence" value="ECO:0007669"/>
    <property type="project" value="UniProtKB-UniRule"/>
</dbReference>
<dbReference type="CDD" id="cd07960">
    <property type="entry name" value="Anticodon_Ia_Ile_BEm"/>
    <property type="match status" value="1"/>
</dbReference>
<dbReference type="CDD" id="cd00818">
    <property type="entry name" value="IleRS_core"/>
    <property type="match status" value="1"/>
</dbReference>
<dbReference type="FunFam" id="1.10.730.20:FF:000001">
    <property type="entry name" value="Isoleucine--tRNA ligase"/>
    <property type="match status" value="1"/>
</dbReference>
<dbReference type="FunFam" id="3.40.50.620:FF:000042">
    <property type="entry name" value="Isoleucine--tRNA ligase"/>
    <property type="match status" value="1"/>
</dbReference>
<dbReference type="FunFam" id="3.40.50.620:FF:000048">
    <property type="entry name" value="Isoleucine--tRNA ligase"/>
    <property type="match status" value="1"/>
</dbReference>
<dbReference type="FunFam" id="3.90.740.10:FF:000002">
    <property type="entry name" value="Isoleucine--tRNA ligase"/>
    <property type="match status" value="1"/>
</dbReference>
<dbReference type="Gene3D" id="1.10.730.20">
    <property type="match status" value="1"/>
</dbReference>
<dbReference type="Gene3D" id="3.40.50.620">
    <property type="entry name" value="HUPs"/>
    <property type="match status" value="2"/>
</dbReference>
<dbReference type="Gene3D" id="3.90.740.10">
    <property type="entry name" value="Valyl/Leucyl/Isoleucyl-tRNA synthetase, editing domain"/>
    <property type="match status" value="1"/>
</dbReference>
<dbReference type="HAMAP" id="MF_02002">
    <property type="entry name" value="Ile_tRNA_synth_type1"/>
    <property type="match status" value="1"/>
</dbReference>
<dbReference type="InterPro" id="IPR001412">
    <property type="entry name" value="aa-tRNA-synth_I_CS"/>
</dbReference>
<dbReference type="InterPro" id="IPR002300">
    <property type="entry name" value="aa-tRNA-synth_Ia"/>
</dbReference>
<dbReference type="InterPro" id="IPR033708">
    <property type="entry name" value="Anticodon_Ile_BEm"/>
</dbReference>
<dbReference type="InterPro" id="IPR002301">
    <property type="entry name" value="Ile-tRNA-ligase"/>
</dbReference>
<dbReference type="InterPro" id="IPR023585">
    <property type="entry name" value="Ile-tRNA-ligase_type1"/>
</dbReference>
<dbReference type="InterPro" id="IPR050081">
    <property type="entry name" value="Ile-tRNA_ligase"/>
</dbReference>
<dbReference type="InterPro" id="IPR013155">
    <property type="entry name" value="M/V/L/I-tRNA-synth_anticd-bd"/>
</dbReference>
<dbReference type="InterPro" id="IPR014729">
    <property type="entry name" value="Rossmann-like_a/b/a_fold"/>
</dbReference>
<dbReference type="InterPro" id="IPR009080">
    <property type="entry name" value="tRNAsynth_Ia_anticodon-bd"/>
</dbReference>
<dbReference type="InterPro" id="IPR009008">
    <property type="entry name" value="Val/Leu/Ile-tRNA-synth_edit"/>
</dbReference>
<dbReference type="InterPro" id="IPR010663">
    <property type="entry name" value="Znf_FPG/IleRS"/>
</dbReference>
<dbReference type="NCBIfam" id="TIGR00392">
    <property type="entry name" value="ileS"/>
    <property type="match status" value="1"/>
</dbReference>
<dbReference type="PANTHER" id="PTHR42765:SF1">
    <property type="entry name" value="ISOLEUCINE--TRNA LIGASE, MITOCHONDRIAL"/>
    <property type="match status" value="1"/>
</dbReference>
<dbReference type="PANTHER" id="PTHR42765">
    <property type="entry name" value="SOLEUCYL-TRNA SYNTHETASE"/>
    <property type="match status" value="1"/>
</dbReference>
<dbReference type="Pfam" id="PF08264">
    <property type="entry name" value="Anticodon_1"/>
    <property type="match status" value="1"/>
</dbReference>
<dbReference type="Pfam" id="PF00133">
    <property type="entry name" value="tRNA-synt_1"/>
    <property type="match status" value="1"/>
</dbReference>
<dbReference type="Pfam" id="PF06827">
    <property type="entry name" value="zf-FPG_IleRS"/>
    <property type="match status" value="1"/>
</dbReference>
<dbReference type="PRINTS" id="PR00984">
    <property type="entry name" value="TRNASYNTHILE"/>
</dbReference>
<dbReference type="SUPFAM" id="SSF47323">
    <property type="entry name" value="Anticodon-binding domain of a subclass of class I aminoacyl-tRNA synthetases"/>
    <property type="match status" value="1"/>
</dbReference>
<dbReference type="SUPFAM" id="SSF52374">
    <property type="entry name" value="Nucleotidylyl transferase"/>
    <property type="match status" value="1"/>
</dbReference>
<dbReference type="SUPFAM" id="SSF50677">
    <property type="entry name" value="ValRS/IleRS/LeuRS editing domain"/>
    <property type="match status" value="1"/>
</dbReference>
<dbReference type="PROSITE" id="PS00178">
    <property type="entry name" value="AA_TRNA_LIGASE_I"/>
    <property type="match status" value="1"/>
</dbReference>
<accession>Q0TLW5</accession>
<reference key="1">
    <citation type="journal article" date="2006" name="Mol. Microbiol.">
        <title>Role of pathogenicity island-associated integrases in the genome plasticity of uropathogenic Escherichia coli strain 536.</title>
        <authorList>
            <person name="Hochhut B."/>
            <person name="Wilde C."/>
            <person name="Balling G."/>
            <person name="Middendorf B."/>
            <person name="Dobrindt U."/>
            <person name="Brzuszkiewicz E."/>
            <person name="Gottschalk G."/>
            <person name="Carniel E."/>
            <person name="Hacker J."/>
        </authorList>
    </citation>
    <scope>NUCLEOTIDE SEQUENCE [LARGE SCALE GENOMIC DNA]</scope>
    <source>
        <strain>536 / UPEC</strain>
    </source>
</reference>
<proteinExistence type="inferred from homology"/>
<comment type="function">
    <text evidence="1">Catalyzes the attachment of isoleucine to tRNA(Ile). As IleRS can inadvertently accommodate and process structurally similar amino acids such as valine, to avoid such errors it has two additional distinct tRNA(Ile)-dependent editing activities. One activity is designated as 'pretransfer' editing and involves the hydrolysis of activated Val-AMP. The other activity is designated 'posttransfer' editing and involves deacylation of mischarged Val-tRNA(Ile).</text>
</comment>
<comment type="catalytic activity">
    <reaction evidence="1">
        <text>tRNA(Ile) + L-isoleucine + ATP = L-isoleucyl-tRNA(Ile) + AMP + diphosphate</text>
        <dbReference type="Rhea" id="RHEA:11060"/>
        <dbReference type="Rhea" id="RHEA-COMP:9666"/>
        <dbReference type="Rhea" id="RHEA-COMP:9695"/>
        <dbReference type="ChEBI" id="CHEBI:30616"/>
        <dbReference type="ChEBI" id="CHEBI:33019"/>
        <dbReference type="ChEBI" id="CHEBI:58045"/>
        <dbReference type="ChEBI" id="CHEBI:78442"/>
        <dbReference type="ChEBI" id="CHEBI:78528"/>
        <dbReference type="ChEBI" id="CHEBI:456215"/>
        <dbReference type="EC" id="6.1.1.5"/>
    </reaction>
</comment>
<comment type="cofactor">
    <cofactor evidence="1">
        <name>Zn(2+)</name>
        <dbReference type="ChEBI" id="CHEBI:29105"/>
    </cofactor>
    <text evidence="1">Binds 1 zinc ion per subunit.</text>
</comment>
<comment type="subunit">
    <text evidence="1">Monomer.</text>
</comment>
<comment type="subcellular location">
    <subcellularLocation>
        <location evidence="1">Cytoplasm</location>
    </subcellularLocation>
</comment>
<comment type="domain">
    <text evidence="1">IleRS has two distinct active sites: one for aminoacylation and one for editing. The misactivated valine is translocated from the active site to the editing site, which sterically excludes the correctly activated isoleucine. The single editing site contains two valyl binding pockets, one specific for each substrate (Val-AMP or Val-tRNA(Ile)).</text>
</comment>
<comment type="similarity">
    <text evidence="1">Belongs to the class-I aminoacyl-tRNA synthetase family. IleS type 1 subfamily.</text>
</comment>
<feature type="chain" id="PRO_1000022062" description="Isoleucine--tRNA ligase">
    <location>
        <begin position="1"/>
        <end position="938"/>
    </location>
</feature>
<feature type="short sequence motif" description="'HIGH' region">
    <location>
        <begin position="58"/>
        <end position="68"/>
    </location>
</feature>
<feature type="short sequence motif" description="'KMSKS' region">
    <location>
        <begin position="602"/>
        <end position="606"/>
    </location>
</feature>
<feature type="binding site" evidence="1">
    <location>
        <position position="561"/>
    </location>
    <ligand>
        <name>L-isoleucyl-5'-AMP</name>
        <dbReference type="ChEBI" id="CHEBI:178002"/>
    </ligand>
</feature>
<feature type="binding site" evidence="1">
    <location>
        <position position="605"/>
    </location>
    <ligand>
        <name>ATP</name>
        <dbReference type="ChEBI" id="CHEBI:30616"/>
    </ligand>
</feature>
<feature type="binding site" evidence="1">
    <location>
        <position position="901"/>
    </location>
    <ligand>
        <name>Zn(2+)</name>
        <dbReference type="ChEBI" id="CHEBI:29105"/>
    </ligand>
</feature>
<feature type="binding site" evidence="1">
    <location>
        <position position="904"/>
    </location>
    <ligand>
        <name>Zn(2+)</name>
        <dbReference type="ChEBI" id="CHEBI:29105"/>
    </ligand>
</feature>
<feature type="binding site" evidence="1">
    <location>
        <position position="921"/>
    </location>
    <ligand>
        <name>Zn(2+)</name>
        <dbReference type="ChEBI" id="CHEBI:29105"/>
    </ligand>
</feature>
<feature type="binding site" evidence="1">
    <location>
        <position position="924"/>
    </location>
    <ligand>
        <name>Zn(2+)</name>
        <dbReference type="ChEBI" id="CHEBI:29105"/>
    </ligand>
</feature>
<feature type="modified residue" description="N6-acetyllysine" evidence="1">
    <location>
        <position position="183"/>
    </location>
</feature>
<protein>
    <recommendedName>
        <fullName evidence="1">Isoleucine--tRNA ligase</fullName>
        <ecNumber evidence="1">6.1.1.5</ecNumber>
    </recommendedName>
    <alternativeName>
        <fullName evidence="1">Isoleucyl-tRNA synthetase</fullName>
        <shortName evidence="1">IleRS</shortName>
    </alternativeName>
</protein>
<keyword id="KW-0007">Acetylation</keyword>
<keyword id="KW-0030">Aminoacyl-tRNA synthetase</keyword>
<keyword id="KW-0067">ATP-binding</keyword>
<keyword id="KW-0963">Cytoplasm</keyword>
<keyword id="KW-0436">Ligase</keyword>
<keyword id="KW-0479">Metal-binding</keyword>
<keyword id="KW-0547">Nucleotide-binding</keyword>
<keyword id="KW-0648">Protein biosynthesis</keyword>
<keyword id="KW-0862">Zinc</keyword>
<name>SYI_ECOL5</name>